<name>SHSA1_XENLA</name>
<organism>
    <name type="scientific">Xenopus laevis</name>
    <name type="common">African clawed frog</name>
    <dbReference type="NCBI Taxonomy" id="8355"/>
    <lineage>
        <taxon>Eukaryota</taxon>
        <taxon>Metazoa</taxon>
        <taxon>Chordata</taxon>
        <taxon>Craniata</taxon>
        <taxon>Vertebrata</taxon>
        <taxon>Euteleostomi</taxon>
        <taxon>Amphibia</taxon>
        <taxon>Batrachia</taxon>
        <taxon>Anura</taxon>
        <taxon>Pipoidea</taxon>
        <taxon>Pipidae</taxon>
        <taxon>Xenopodinae</taxon>
        <taxon>Xenopus</taxon>
        <taxon>Xenopus</taxon>
    </lineage>
</organism>
<dbReference type="EMBL" id="AY579372">
    <property type="protein sequence ID" value="AAT64430.1"/>
    <property type="molecule type" value="mRNA"/>
</dbReference>
<dbReference type="EMBL" id="BC133198">
    <property type="protein sequence ID" value="AAI33199.1"/>
    <property type="molecule type" value="mRNA"/>
</dbReference>
<dbReference type="RefSeq" id="NP_001085264.1">
    <property type="nucleotide sequence ID" value="NM_001091795.2"/>
</dbReference>
<dbReference type="SMR" id="A2RV66"/>
<dbReference type="TCDB" id="8.A.83.1.5">
    <property type="family name" value="the shisa6 regulator of short-term neuronal synaptic plasticity (shisa) family"/>
</dbReference>
<dbReference type="GeneID" id="443566"/>
<dbReference type="KEGG" id="xla:443566"/>
<dbReference type="AGR" id="Xenbase:XB-GENE-5937902"/>
<dbReference type="CTD" id="443566"/>
<dbReference type="Xenbase" id="XB-GENE-5937902">
    <property type="gene designation" value="shisa1.L"/>
</dbReference>
<dbReference type="OrthoDB" id="10025410at2759"/>
<dbReference type="Proteomes" id="UP000186698">
    <property type="component" value="Chromosome 8L"/>
</dbReference>
<dbReference type="Bgee" id="443566">
    <property type="expression patterns" value="Expressed in blastula and 9 other cell types or tissues"/>
</dbReference>
<dbReference type="GO" id="GO:0005783">
    <property type="term" value="C:endoplasmic reticulum"/>
    <property type="evidence" value="ECO:0007669"/>
    <property type="project" value="UniProtKB-SubCell"/>
</dbReference>
<dbReference type="GO" id="GO:0016020">
    <property type="term" value="C:membrane"/>
    <property type="evidence" value="ECO:0007669"/>
    <property type="project" value="UniProtKB-SubCell"/>
</dbReference>
<dbReference type="InterPro" id="IPR026910">
    <property type="entry name" value="Shisa"/>
</dbReference>
<dbReference type="InterPro" id="IPR053891">
    <property type="entry name" value="Shisa_N"/>
</dbReference>
<dbReference type="PANTHER" id="PTHR31395:SF18">
    <property type="entry name" value="PROTEIN SHISA-2 HOMOLOG PRECURSOR"/>
    <property type="match status" value="1"/>
</dbReference>
<dbReference type="PANTHER" id="PTHR31395">
    <property type="entry name" value="SHISA"/>
    <property type="match status" value="1"/>
</dbReference>
<dbReference type="Pfam" id="PF13908">
    <property type="entry name" value="Shisa_N"/>
    <property type="match status" value="1"/>
</dbReference>
<proteinExistence type="evidence at transcript level"/>
<protein>
    <recommendedName>
        <fullName>Protein shisa-1</fullName>
    </recommendedName>
</protein>
<keyword id="KW-0217">Developmental protein</keyword>
<keyword id="KW-0256">Endoplasmic reticulum</keyword>
<keyword id="KW-0472">Membrane</keyword>
<keyword id="KW-1185">Reference proteome</keyword>
<keyword id="KW-0732">Signal</keyword>
<keyword id="KW-0812">Transmembrane</keyword>
<keyword id="KW-1133">Transmembrane helix</keyword>
<reference key="1">
    <citation type="journal article" date="2005" name="Cell">
        <title>Shisa promotes head formation through the inhibition of receptor protein maturation for the caudalizing factors, Wnt and FGF.</title>
        <authorList>
            <person name="Yamamoto A."/>
            <person name="Nagano T."/>
            <person name="Takehara S."/>
            <person name="Hibi M."/>
            <person name="Aizawa S."/>
        </authorList>
    </citation>
    <scope>NUCLEOTIDE SEQUENCE [MRNA]</scope>
    <scope>SUBCELLULAR LOCATION</scope>
    <scope>FUNCTION</scope>
    <scope>DEVELOPMENTAL STAGE</scope>
</reference>
<reference key="2">
    <citation type="submission" date="2007-02" db="EMBL/GenBank/DDBJ databases">
        <authorList>
            <consortium name="NIH - Xenopus Gene Collection (XGC) project"/>
        </authorList>
    </citation>
    <scope>NUCLEOTIDE SEQUENCE [LARGE SCALE MRNA]</scope>
    <source>
        <tissue>Embryo</tissue>
    </source>
</reference>
<gene>
    <name type="primary">shisa1</name>
    <name type="synonym">shisa</name>
</gene>
<comment type="function">
    <text evidence="3">Required for head formation during gastrulation. Functions as an inhibitor for the caudalizing signals wnt and fgf, does not inhibit bmp, activin and nodal signaling in head formation process. Induces retention of fzd8 in the endoplasmic reticulum and inhibits trafficking of fzd8 to the cell surface.</text>
</comment>
<comment type="subunit">
    <text>Interacts with immature forms of fzd8 and fgfr.</text>
</comment>
<comment type="subcellular location">
    <subcellularLocation>
        <location evidence="3">Endoplasmic reticulum</location>
    </subcellularLocation>
    <subcellularLocation>
        <location evidence="4">Membrane</location>
        <topology evidence="4">Single-pass membrane protein</topology>
    </subcellularLocation>
</comment>
<comment type="developmental stage">
    <text evidence="3">Expressed in the prospective head ectoderm and the Spemann organizer at gastrula stage. Expression increases during gastrulation and decreases during early neurulation. As gastrulation progresses, expression occurs in the anterior neuroectoderm, after mid-gastrulation, expressed in the superficial layer. The expression in endomesoderm concomitantly becomes restricted to the future prechordal plate territory. At the mid-neurula stage, the ectodermal expression declines, while that in the prechordal plate persists until the late-neurula stage.</text>
</comment>
<comment type="miscellaneous">
    <text>'Shisa' was named after a sculpture form, common to southern Japan, with a large head similar to the Egyptian sphinx.</text>
</comment>
<comment type="similarity">
    <text evidence="4">Belongs to the shisa family.</text>
</comment>
<feature type="signal peptide" evidence="1">
    <location>
        <begin position="1"/>
        <end position="18"/>
    </location>
</feature>
<feature type="chain" id="PRO_0000330022" description="Protein shisa-1">
    <location>
        <begin position="19"/>
        <end position="269"/>
    </location>
</feature>
<feature type="topological domain" description="Extracellular" evidence="1">
    <location>
        <begin position="19"/>
        <end position="98"/>
    </location>
</feature>
<feature type="transmembrane region" description="Helical" evidence="1">
    <location>
        <begin position="99"/>
        <end position="119"/>
    </location>
</feature>
<feature type="topological domain" description="Cytoplasmic" evidence="1">
    <location>
        <begin position="120"/>
        <end position="269"/>
    </location>
</feature>
<feature type="region of interest" description="Disordered" evidence="2">
    <location>
        <begin position="129"/>
        <end position="167"/>
    </location>
</feature>
<feature type="compositionally biased region" description="Low complexity" evidence="2">
    <location>
        <begin position="146"/>
        <end position="162"/>
    </location>
</feature>
<feature type="sequence conflict" description="In Ref. 1; AAT64430." evidence="4" ref="1">
    <original>P</original>
    <variation>S</variation>
    <location>
        <position position="47"/>
    </location>
</feature>
<feature type="sequence conflict" description="In Ref. 1; AAT64430." evidence="4" ref="1">
    <original>V</original>
    <variation>A</variation>
    <location>
        <position position="132"/>
    </location>
</feature>
<evidence type="ECO:0000255" key="1"/>
<evidence type="ECO:0000256" key="2">
    <source>
        <dbReference type="SAM" id="MobiDB-lite"/>
    </source>
</evidence>
<evidence type="ECO:0000269" key="3">
    <source>
    </source>
</evidence>
<evidence type="ECO:0000305" key="4"/>
<sequence length="269" mass="29184">MEFIVLLTVCALLGLSCGQHGEYCHGWTDSYGIWRPGFQCPERYDPPEATFCCGSCGLKYCCSTVESRLDQGLCPNEEDLRDGVPSIELPPTVPTYFPFLLVGSIFVSFVILGSLVGLCCCKCLKPEDDTQVSGPAPIQSRLLDQDPSTDTSRHSSSSSASMPRPPIGARPQNLCSLGAENINLYMNMPPTFPMMGCPQNAQFMHPGTAGPSFMQPPFINYAVPAEHAIIMAPAPYIDARNCYGQTSNIYCQVPQQNDQTVCSGSPSKC</sequence>
<accession>A2RV66</accession>
<accession>Q6E4B2</accession>